<accession>Q1ICI1</accession>
<keyword id="KW-0963">Cytoplasm</keyword>
<keyword id="KW-0238">DNA-binding</keyword>
<proteinExistence type="inferred from homology"/>
<name>Y1789_PSEE4</name>
<gene>
    <name type="ordered locus">PSEEN1789</name>
</gene>
<dbReference type="EMBL" id="CT573326">
    <property type="protein sequence ID" value="CAK14632.1"/>
    <property type="molecule type" value="Genomic_DNA"/>
</dbReference>
<dbReference type="RefSeq" id="WP_011533041.1">
    <property type="nucleotide sequence ID" value="NC_008027.1"/>
</dbReference>
<dbReference type="SMR" id="Q1ICI1"/>
<dbReference type="STRING" id="384676.PSEEN1789"/>
<dbReference type="GeneID" id="32805019"/>
<dbReference type="KEGG" id="pen:PSEEN1789"/>
<dbReference type="eggNOG" id="COG0718">
    <property type="taxonomic scope" value="Bacteria"/>
</dbReference>
<dbReference type="HOGENOM" id="CLU_140930_0_0_6"/>
<dbReference type="OrthoDB" id="9808738at2"/>
<dbReference type="Proteomes" id="UP000000658">
    <property type="component" value="Chromosome"/>
</dbReference>
<dbReference type="GO" id="GO:0043590">
    <property type="term" value="C:bacterial nucleoid"/>
    <property type="evidence" value="ECO:0007669"/>
    <property type="project" value="UniProtKB-UniRule"/>
</dbReference>
<dbReference type="GO" id="GO:0005829">
    <property type="term" value="C:cytosol"/>
    <property type="evidence" value="ECO:0007669"/>
    <property type="project" value="TreeGrafter"/>
</dbReference>
<dbReference type="GO" id="GO:0003677">
    <property type="term" value="F:DNA binding"/>
    <property type="evidence" value="ECO:0007669"/>
    <property type="project" value="UniProtKB-UniRule"/>
</dbReference>
<dbReference type="FunFam" id="3.30.1310.10:FF:000001">
    <property type="entry name" value="Nucleoid-associated protein YbaB"/>
    <property type="match status" value="1"/>
</dbReference>
<dbReference type="Gene3D" id="3.30.1310.10">
    <property type="entry name" value="Nucleoid-associated protein YbaB-like domain"/>
    <property type="match status" value="1"/>
</dbReference>
<dbReference type="HAMAP" id="MF_00274">
    <property type="entry name" value="DNA_YbaB_EbfC"/>
    <property type="match status" value="1"/>
</dbReference>
<dbReference type="InterPro" id="IPR036894">
    <property type="entry name" value="YbaB-like_sf"/>
</dbReference>
<dbReference type="InterPro" id="IPR004401">
    <property type="entry name" value="YbaB/EbfC"/>
</dbReference>
<dbReference type="NCBIfam" id="TIGR00103">
    <property type="entry name" value="DNA_YbaB_EbfC"/>
    <property type="match status" value="1"/>
</dbReference>
<dbReference type="PANTHER" id="PTHR33449">
    <property type="entry name" value="NUCLEOID-ASSOCIATED PROTEIN YBAB"/>
    <property type="match status" value="1"/>
</dbReference>
<dbReference type="PANTHER" id="PTHR33449:SF1">
    <property type="entry name" value="NUCLEOID-ASSOCIATED PROTEIN YBAB"/>
    <property type="match status" value="1"/>
</dbReference>
<dbReference type="Pfam" id="PF02575">
    <property type="entry name" value="YbaB_DNA_bd"/>
    <property type="match status" value="1"/>
</dbReference>
<dbReference type="PIRSF" id="PIRSF004555">
    <property type="entry name" value="UCP004555"/>
    <property type="match status" value="1"/>
</dbReference>
<dbReference type="SUPFAM" id="SSF82607">
    <property type="entry name" value="YbaB-like"/>
    <property type="match status" value="1"/>
</dbReference>
<feature type="chain" id="PRO_1000003801" description="Nucleoid-associated protein PSEEN1789">
    <location>
        <begin position="1"/>
        <end position="111"/>
    </location>
</feature>
<feature type="region of interest" description="Disordered" evidence="2">
    <location>
        <begin position="1"/>
        <end position="25"/>
    </location>
</feature>
<feature type="region of interest" description="Disordered" evidence="2">
    <location>
        <begin position="89"/>
        <end position="111"/>
    </location>
</feature>
<evidence type="ECO:0000255" key="1">
    <source>
        <dbReference type="HAMAP-Rule" id="MF_00274"/>
    </source>
</evidence>
<evidence type="ECO:0000256" key="2">
    <source>
        <dbReference type="SAM" id="MobiDB-lite"/>
    </source>
</evidence>
<comment type="function">
    <text evidence="1">Binds to DNA and alters its conformation. May be involved in regulation of gene expression, nucleoid organization and DNA protection.</text>
</comment>
<comment type="subunit">
    <text evidence="1">Homodimer.</text>
</comment>
<comment type="subcellular location">
    <subcellularLocation>
        <location evidence="1">Cytoplasm</location>
        <location evidence="1">Nucleoid</location>
    </subcellularLocation>
</comment>
<comment type="similarity">
    <text evidence="1">Belongs to the YbaB/EbfC family.</text>
</comment>
<sequence>MMKGGMAGLMKQAQQMQEKMQKMQEELANAEVTGQSGGGLVSVVMTGRHDVKRVSIDQSLMSTDADDKEVLEDLIAAALNDAVRKIEQNSQDKMGSMTAGMQLPPGFKMPF</sequence>
<protein>
    <recommendedName>
        <fullName evidence="1">Nucleoid-associated protein PSEEN1789</fullName>
    </recommendedName>
</protein>
<organism>
    <name type="scientific">Pseudomonas entomophila (strain L48)</name>
    <dbReference type="NCBI Taxonomy" id="384676"/>
    <lineage>
        <taxon>Bacteria</taxon>
        <taxon>Pseudomonadati</taxon>
        <taxon>Pseudomonadota</taxon>
        <taxon>Gammaproteobacteria</taxon>
        <taxon>Pseudomonadales</taxon>
        <taxon>Pseudomonadaceae</taxon>
        <taxon>Pseudomonas</taxon>
    </lineage>
</organism>
<reference key="1">
    <citation type="journal article" date="2006" name="Nat. Biotechnol.">
        <title>Complete genome sequence of the entomopathogenic and metabolically versatile soil bacterium Pseudomonas entomophila.</title>
        <authorList>
            <person name="Vodovar N."/>
            <person name="Vallenet D."/>
            <person name="Cruveiller S."/>
            <person name="Rouy Z."/>
            <person name="Barbe V."/>
            <person name="Acosta C."/>
            <person name="Cattolico L."/>
            <person name="Jubin C."/>
            <person name="Lajus A."/>
            <person name="Segurens B."/>
            <person name="Vacherie B."/>
            <person name="Wincker P."/>
            <person name="Weissenbach J."/>
            <person name="Lemaitre B."/>
            <person name="Medigue C."/>
            <person name="Boccard F."/>
        </authorList>
    </citation>
    <scope>NUCLEOTIDE SEQUENCE [LARGE SCALE GENOMIC DNA]</scope>
    <source>
        <strain>L48</strain>
    </source>
</reference>